<sequence length="105" mass="11367">MSSPPKEKTETRAGHLPAVKAGGMRIVQKHQSAIEVPDKKDDKDSTEYETVIPPKLPVVVSGVVTKGDKDFTPAAAQVAHQKPVPSAQKLPAGQHLNQHIHQPRK</sequence>
<evidence type="ECO:0000256" key="1">
    <source>
        <dbReference type="SAM" id="MobiDB-lite"/>
    </source>
</evidence>
<evidence type="ECO:0000269" key="2">
    <source>
    </source>
</evidence>
<evidence type="ECO:0000303" key="3">
    <source>
    </source>
</evidence>
<evidence type="ECO:0000305" key="4"/>
<evidence type="ECO:0000312" key="5">
    <source>
        <dbReference type="ZFIN" id="ZDB-GENE-000511-3"/>
    </source>
</evidence>
<reference key="1">
    <citation type="journal article" date="2000" name="Cell Death Differ.">
        <title>Genes with homology to mammalian apoptosis regulators identified in zebrafish.</title>
        <authorList>
            <person name="Inohara N."/>
            <person name="Nunez G."/>
        </authorList>
    </citation>
    <scope>NUCLEOTIDE SEQUENCE [GENOMIC DNA]</scope>
</reference>
<reference key="2">
    <citation type="journal article" date="2013" name="Nature">
        <title>The zebrafish reference genome sequence and its relationship to the human genome.</title>
        <authorList>
            <person name="Howe K."/>
            <person name="Clark M.D."/>
            <person name="Torroja C.F."/>
            <person name="Torrance J."/>
            <person name="Berthelot C."/>
            <person name="Muffato M."/>
            <person name="Collins J.E."/>
            <person name="Humphray S."/>
            <person name="McLaren K."/>
            <person name="Matthews L."/>
            <person name="McLaren S."/>
            <person name="Sealy I."/>
            <person name="Caccamo M."/>
            <person name="Churcher C."/>
            <person name="Scott C."/>
            <person name="Barrett J.C."/>
            <person name="Koch R."/>
            <person name="Rauch G.J."/>
            <person name="White S."/>
            <person name="Chow W."/>
            <person name="Kilian B."/>
            <person name="Quintais L.T."/>
            <person name="Guerra-Assuncao J.A."/>
            <person name="Zhou Y."/>
            <person name="Gu Y."/>
            <person name="Yen J."/>
            <person name="Vogel J.H."/>
            <person name="Eyre T."/>
            <person name="Redmond S."/>
            <person name="Banerjee R."/>
            <person name="Chi J."/>
            <person name="Fu B."/>
            <person name="Langley E."/>
            <person name="Maguire S.F."/>
            <person name="Laird G.K."/>
            <person name="Lloyd D."/>
            <person name="Kenyon E."/>
            <person name="Donaldson S."/>
            <person name="Sehra H."/>
            <person name="Almeida-King J."/>
            <person name="Loveland J."/>
            <person name="Trevanion S."/>
            <person name="Jones M."/>
            <person name="Quail M."/>
            <person name="Willey D."/>
            <person name="Hunt A."/>
            <person name="Burton J."/>
            <person name="Sims S."/>
            <person name="McLay K."/>
            <person name="Plumb B."/>
            <person name="Davis J."/>
            <person name="Clee C."/>
            <person name="Oliver K."/>
            <person name="Clark R."/>
            <person name="Riddle C."/>
            <person name="Elliot D."/>
            <person name="Threadgold G."/>
            <person name="Harden G."/>
            <person name="Ware D."/>
            <person name="Begum S."/>
            <person name="Mortimore B."/>
            <person name="Kerry G."/>
            <person name="Heath P."/>
            <person name="Phillimore B."/>
            <person name="Tracey A."/>
            <person name="Corby N."/>
            <person name="Dunn M."/>
            <person name="Johnson C."/>
            <person name="Wood J."/>
            <person name="Clark S."/>
            <person name="Pelan S."/>
            <person name="Griffiths G."/>
            <person name="Smith M."/>
            <person name="Glithero R."/>
            <person name="Howden P."/>
            <person name="Barker N."/>
            <person name="Lloyd C."/>
            <person name="Stevens C."/>
            <person name="Harley J."/>
            <person name="Holt K."/>
            <person name="Panagiotidis G."/>
            <person name="Lovell J."/>
            <person name="Beasley H."/>
            <person name="Henderson C."/>
            <person name="Gordon D."/>
            <person name="Auger K."/>
            <person name="Wright D."/>
            <person name="Collins J."/>
            <person name="Raisen C."/>
            <person name="Dyer L."/>
            <person name="Leung K."/>
            <person name="Robertson L."/>
            <person name="Ambridge K."/>
            <person name="Leongamornlert D."/>
            <person name="McGuire S."/>
            <person name="Gilderthorp R."/>
            <person name="Griffiths C."/>
            <person name="Manthravadi D."/>
            <person name="Nichol S."/>
            <person name="Barker G."/>
            <person name="Whitehead S."/>
            <person name="Kay M."/>
            <person name="Brown J."/>
            <person name="Murnane C."/>
            <person name="Gray E."/>
            <person name="Humphries M."/>
            <person name="Sycamore N."/>
            <person name="Barker D."/>
            <person name="Saunders D."/>
            <person name="Wallis J."/>
            <person name="Babbage A."/>
            <person name="Hammond S."/>
            <person name="Mashreghi-Mohammadi M."/>
            <person name="Barr L."/>
            <person name="Martin S."/>
            <person name="Wray P."/>
            <person name="Ellington A."/>
            <person name="Matthews N."/>
            <person name="Ellwood M."/>
            <person name="Woodmansey R."/>
            <person name="Clark G."/>
            <person name="Cooper J."/>
            <person name="Tromans A."/>
            <person name="Grafham D."/>
            <person name="Skuce C."/>
            <person name="Pandian R."/>
            <person name="Andrews R."/>
            <person name="Harrison E."/>
            <person name="Kimberley A."/>
            <person name="Garnett J."/>
            <person name="Fosker N."/>
            <person name="Hall R."/>
            <person name="Garner P."/>
            <person name="Kelly D."/>
            <person name="Bird C."/>
            <person name="Palmer S."/>
            <person name="Gehring I."/>
            <person name="Berger A."/>
            <person name="Dooley C.M."/>
            <person name="Ersan-Urun Z."/>
            <person name="Eser C."/>
            <person name="Geiger H."/>
            <person name="Geisler M."/>
            <person name="Karotki L."/>
            <person name="Kirn A."/>
            <person name="Konantz J."/>
            <person name="Konantz M."/>
            <person name="Oberlander M."/>
            <person name="Rudolph-Geiger S."/>
            <person name="Teucke M."/>
            <person name="Lanz C."/>
            <person name="Raddatz G."/>
            <person name="Osoegawa K."/>
            <person name="Zhu B."/>
            <person name="Rapp A."/>
            <person name="Widaa S."/>
            <person name="Langford C."/>
            <person name="Yang F."/>
            <person name="Schuster S.C."/>
            <person name="Carter N.P."/>
            <person name="Harrow J."/>
            <person name="Ning Z."/>
            <person name="Herrero J."/>
            <person name="Searle S.M."/>
            <person name="Enright A."/>
            <person name="Geisler R."/>
            <person name="Plasterk R.H."/>
            <person name="Lee C."/>
            <person name="Westerfield M."/>
            <person name="de Jong P.J."/>
            <person name="Zon L.I."/>
            <person name="Postlethwait J.H."/>
            <person name="Nusslein-Volhard C."/>
            <person name="Hubbard T.J."/>
            <person name="Roest Crollius H."/>
            <person name="Rogers J."/>
            <person name="Stemple D.L."/>
        </authorList>
    </citation>
    <scope>NUCLEOTIDE SEQUENCE [LARGE SCALE GENOMIC DNA]</scope>
    <source>
        <strain>Tuebingen</strain>
    </source>
</reference>
<reference key="3">
    <citation type="submission" date="2003-03" db="EMBL/GenBank/DDBJ databases">
        <authorList>
            <consortium name="NIH - Zebrafish Gene Collection (ZGC) project"/>
        </authorList>
    </citation>
    <scope>NUCLEOTIDE SEQUENCE [LARGE SCALE MRNA]</scope>
</reference>
<reference key="4">
    <citation type="journal article" date="2023" name="Nature">
        <title>A molecular network of conserved factors keeps ribosomes dormant in the egg.</title>
        <authorList>
            <person name="Leesch F."/>
            <person name="Lorenzo-Orts L."/>
            <person name="Pribitzer C."/>
            <person name="Grishkovskaya I."/>
            <person name="Roehsner J."/>
            <person name="Chugunova A."/>
            <person name="Matzinger M."/>
            <person name="Roitinger E."/>
            <person name="Belacic K."/>
            <person name="Kandolf S."/>
            <person name="Lin T.Y."/>
            <person name="Mechtler K."/>
            <person name="Meinhart A."/>
            <person name="Haselbach D."/>
            <person name="Pauli A."/>
        </authorList>
    </citation>
    <scope>FUNCTION</scope>
    <scope>INTERACTION WITH EIF5A</scope>
    <scope>RIBOSOME-BINDING</scope>
</reference>
<gene>
    <name evidence="3 5" type="primary">dap</name>
</gene>
<dbReference type="EMBL" id="AF231127">
    <property type="protein sequence ID" value="AAF66957.1"/>
    <property type="molecule type" value="mRNA"/>
</dbReference>
<dbReference type="EMBL" id="AL627129">
    <property type="status" value="NOT_ANNOTATED_CDS"/>
    <property type="molecule type" value="Genomic_DNA"/>
</dbReference>
<dbReference type="EMBL" id="BC049052">
    <property type="protein sequence ID" value="AAH49052.1"/>
    <property type="molecule type" value="mRNA"/>
</dbReference>
<dbReference type="RefSeq" id="NP_571647.1">
    <property type="nucleotide sequence ID" value="NM_131572.2"/>
</dbReference>
<dbReference type="SMR" id="Q9I9N1"/>
<dbReference type="GeneID" id="58093"/>
<dbReference type="KEGG" id="dre:58093"/>
<dbReference type="AGR" id="ZFIN:ZDB-GENE-000511-3"/>
<dbReference type="CTD" id="1611"/>
<dbReference type="ZFIN" id="ZDB-GENE-000511-3">
    <property type="gene designation" value="dap"/>
</dbReference>
<dbReference type="OrthoDB" id="5973225at2759"/>
<dbReference type="PRO" id="PR:Q9I9N1"/>
<dbReference type="Proteomes" id="UP000000437">
    <property type="component" value="Alternate scaffold 24"/>
</dbReference>
<dbReference type="Proteomes" id="UP000000437">
    <property type="component" value="Chromosome 24"/>
</dbReference>
<dbReference type="GO" id="GO:0043022">
    <property type="term" value="F:ribosome binding"/>
    <property type="evidence" value="ECO:0000314"/>
    <property type="project" value="UniProtKB"/>
</dbReference>
<dbReference type="GO" id="GO:0097190">
    <property type="term" value="P:apoptotic signaling pathway"/>
    <property type="evidence" value="ECO:0000318"/>
    <property type="project" value="GO_Central"/>
</dbReference>
<dbReference type="GO" id="GO:0010507">
    <property type="term" value="P:negative regulation of autophagy"/>
    <property type="evidence" value="ECO:0000318"/>
    <property type="project" value="GO_Central"/>
</dbReference>
<dbReference type="GO" id="GO:0141014">
    <property type="term" value="P:ribosome hibernation"/>
    <property type="evidence" value="ECO:0000314"/>
    <property type="project" value="UniProtKB"/>
</dbReference>
<dbReference type="InterPro" id="IPR024130">
    <property type="entry name" value="DAP1/DAPL1"/>
</dbReference>
<dbReference type="PANTHER" id="PTHR13177">
    <property type="entry name" value="DEATH-ASSOCIATED PROTEIN 1"/>
    <property type="match status" value="1"/>
</dbReference>
<dbReference type="PANTHER" id="PTHR13177:SF3">
    <property type="entry name" value="DEATH-ASSOCIATED PROTEIN 1"/>
    <property type="match status" value="1"/>
</dbReference>
<dbReference type="Pfam" id="PF15228">
    <property type="entry name" value="DAP"/>
    <property type="match status" value="1"/>
</dbReference>
<protein>
    <recommendedName>
        <fullName>Death-associated protein 1 homolog</fullName>
        <shortName>DAP-1</shortName>
    </recommendedName>
    <alternativeName>
        <fullName>Death-associated protein 1A</fullName>
        <shortName>DAP-1A</shortName>
    </alternativeName>
</protein>
<proteinExistence type="evidence at protein level"/>
<organism>
    <name type="scientific">Danio rerio</name>
    <name type="common">Zebrafish</name>
    <name type="synonym">Brachydanio rerio</name>
    <dbReference type="NCBI Taxonomy" id="7955"/>
    <lineage>
        <taxon>Eukaryota</taxon>
        <taxon>Metazoa</taxon>
        <taxon>Chordata</taxon>
        <taxon>Craniata</taxon>
        <taxon>Vertebrata</taxon>
        <taxon>Euteleostomi</taxon>
        <taxon>Actinopterygii</taxon>
        <taxon>Neopterygii</taxon>
        <taxon>Teleostei</taxon>
        <taxon>Ostariophysi</taxon>
        <taxon>Cypriniformes</taxon>
        <taxon>Danionidae</taxon>
        <taxon>Danioninae</taxon>
        <taxon>Danio</taxon>
    </lineage>
</organism>
<keyword id="KW-1185">Reference proteome</keyword>
<keyword id="KW-0810">Translation regulation</keyword>
<feature type="chain" id="PRO_0000458230" description="Death-associated protein 1 homolog">
    <location>
        <begin position="1"/>
        <end position="105"/>
    </location>
</feature>
<feature type="region of interest" description="Disordered" evidence="1">
    <location>
        <begin position="75"/>
        <end position="105"/>
    </location>
</feature>
<feature type="compositionally biased region" description="Polar residues" evidence="1">
    <location>
        <begin position="95"/>
        <end position="105"/>
    </location>
</feature>
<name>DAP1A_DANRE</name>
<accession>Q9I9N1</accession>
<comment type="function">
    <text evidence="2">Ribosome-binding protein involved in ribosome hibernation, a process during which ribosomes are stabilized in an inactive state and preserved from proteasomal degradation (PubMed:36653451). Acts via its association with eiF5a (eif5a and eif5a2) at the polypeptide exit tunnel of the ribosome, preventing mRNA translation (PubMed:36653451). Involved in ribosome hibernation in the mature egg by preventing mRNA translation, leading to ribosome inactivation (PubMed:36653451). Ribosomes, which are produced in large quantities during oogenesis, are stored and translationally repressed in the egg and early embryo (PubMed:36653451). Compared to dap1b, binds and inactivates ribosomes less efficiently (PubMed:36653451).</text>
</comment>
<comment type="subunit">
    <text evidence="2">Associates with ribosomes; inhibiting translation (PubMed:36653451). Interacts with eiF5a (eif5a and eif5a2); inhibiting translation (PubMed:36653451).</text>
</comment>
<comment type="similarity">
    <text evidence="4">Belongs to the DAP-DAPL1 family.</text>
</comment>